<dbReference type="EMBL" id="BA000001">
    <property type="protein sequence ID" value="BAA30748.1"/>
    <property type="molecule type" value="Genomic_DNA"/>
</dbReference>
<dbReference type="PIR" id="D71043">
    <property type="entry name" value="D71043"/>
</dbReference>
<dbReference type="RefSeq" id="WP_010885706.1">
    <property type="nucleotide sequence ID" value="NC_000961.1"/>
</dbReference>
<dbReference type="SMR" id="O59302"/>
<dbReference type="STRING" id="70601.gene:9378627"/>
<dbReference type="EnsemblBacteria" id="BAA30748">
    <property type="protein sequence ID" value="BAA30748"/>
    <property type="gene ID" value="BAA30748"/>
</dbReference>
<dbReference type="GeneID" id="1442486"/>
<dbReference type="KEGG" id="pho:PH1636"/>
<dbReference type="eggNOG" id="arCOG00780">
    <property type="taxonomic scope" value="Archaea"/>
</dbReference>
<dbReference type="OrthoDB" id="11309at2157"/>
<dbReference type="Proteomes" id="UP000000752">
    <property type="component" value="Chromosome"/>
</dbReference>
<dbReference type="GO" id="GO:0022625">
    <property type="term" value="C:cytosolic large ribosomal subunit"/>
    <property type="evidence" value="ECO:0007669"/>
    <property type="project" value="TreeGrafter"/>
</dbReference>
<dbReference type="GO" id="GO:0003723">
    <property type="term" value="F:RNA binding"/>
    <property type="evidence" value="ECO:0007669"/>
    <property type="project" value="TreeGrafter"/>
</dbReference>
<dbReference type="GO" id="GO:0003735">
    <property type="term" value="F:structural constituent of ribosome"/>
    <property type="evidence" value="ECO:0007669"/>
    <property type="project" value="InterPro"/>
</dbReference>
<dbReference type="GO" id="GO:0006412">
    <property type="term" value="P:translation"/>
    <property type="evidence" value="ECO:0007669"/>
    <property type="project" value="UniProtKB-UniRule"/>
</dbReference>
<dbReference type="FunFam" id="3.100.10.10:FF:000013">
    <property type="entry name" value="50S ribosomal protein L18e"/>
    <property type="match status" value="1"/>
</dbReference>
<dbReference type="Gene3D" id="3.100.10.10">
    <property type="match status" value="1"/>
</dbReference>
<dbReference type="HAMAP" id="MF_00329">
    <property type="entry name" value="Ribosomal_eL18"/>
    <property type="match status" value="1"/>
</dbReference>
<dbReference type="InterPro" id="IPR000039">
    <property type="entry name" value="Ribosomal_eL18"/>
</dbReference>
<dbReference type="InterPro" id="IPR021132">
    <property type="entry name" value="Ribosomal_eL18/eL18-A/B/_CS"/>
</dbReference>
<dbReference type="InterPro" id="IPR022947">
    <property type="entry name" value="Ribosomal_eL18_arc"/>
</dbReference>
<dbReference type="InterPro" id="IPR021131">
    <property type="entry name" value="Ribosomal_uL15/eL18"/>
</dbReference>
<dbReference type="InterPro" id="IPR036227">
    <property type="entry name" value="Ribosomal_uL15/eL18_sf"/>
</dbReference>
<dbReference type="NCBIfam" id="NF003079">
    <property type="entry name" value="PRK04005.1"/>
    <property type="match status" value="1"/>
</dbReference>
<dbReference type="PANTHER" id="PTHR10934">
    <property type="entry name" value="60S RIBOSOMAL PROTEIN L18"/>
    <property type="match status" value="1"/>
</dbReference>
<dbReference type="PANTHER" id="PTHR10934:SF2">
    <property type="entry name" value="LARGE RIBOSOMAL SUBUNIT PROTEIN EL18"/>
    <property type="match status" value="1"/>
</dbReference>
<dbReference type="Pfam" id="PF17135">
    <property type="entry name" value="Ribosomal_L18"/>
    <property type="match status" value="1"/>
</dbReference>
<dbReference type="SUPFAM" id="SSF52080">
    <property type="entry name" value="Ribosomal proteins L15p and L18e"/>
    <property type="match status" value="1"/>
</dbReference>
<dbReference type="PROSITE" id="PS01106">
    <property type="entry name" value="RIBOSOMAL_L18E"/>
    <property type="match status" value="1"/>
</dbReference>
<name>RL18E_PYRHO</name>
<accession>O59302</accession>
<comment type="similarity">
    <text evidence="1">Belongs to the eukaryotic ribosomal protein eL18 family.</text>
</comment>
<protein>
    <recommendedName>
        <fullName evidence="1">Large ribosomal subunit protein eL18</fullName>
    </recommendedName>
    <alternativeName>
        <fullName evidence="2">50S ribosomal protein L18e</fullName>
    </alternativeName>
</protein>
<feature type="chain" id="PRO_0000132800" description="Large ribosomal subunit protein eL18">
    <location>
        <begin position="1"/>
        <end position="120"/>
    </location>
</feature>
<evidence type="ECO:0000255" key="1">
    <source>
        <dbReference type="HAMAP-Rule" id="MF_00329"/>
    </source>
</evidence>
<evidence type="ECO:0000305" key="2"/>
<gene>
    <name evidence="1" type="primary">rpl18e</name>
    <name type="ordered locus">PH1636</name>
</gene>
<proteinExistence type="inferred from homology"/>
<organism>
    <name type="scientific">Pyrococcus horikoshii (strain ATCC 700860 / DSM 12428 / JCM 9974 / NBRC 100139 / OT-3)</name>
    <dbReference type="NCBI Taxonomy" id="70601"/>
    <lineage>
        <taxon>Archaea</taxon>
        <taxon>Methanobacteriati</taxon>
        <taxon>Methanobacteriota</taxon>
        <taxon>Thermococci</taxon>
        <taxon>Thermococcales</taxon>
        <taxon>Thermococcaceae</taxon>
        <taxon>Pyrococcus</taxon>
    </lineage>
</organism>
<keyword id="KW-0687">Ribonucleoprotein</keyword>
<keyword id="KW-0689">Ribosomal protein</keyword>
<sequence length="120" mass="13612">MKRTGPTDPNLRRLIRFLKKKSNEEGVKIWKDLAWRLERPRRQRAEVNVSKINRYAKDGDMIVVPGSVLGAGKLEKKVIVAAWKFSETARKKITEAGGEAITIEELIERNPKGSGVIIME</sequence>
<reference key="1">
    <citation type="journal article" date="1998" name="DNA Res.">
        <title>Complete sequence and gene organization of the genome of a hyper-thermophilic archaebacterium, Pyrococcus horikoshii OT3.</title>
        <authorList>
            <person name="Kawarabayasi Y."/>
            <person name="Sawada M."/>
            <person name="Horikawa H."/>
            <person name="Haikawa Y."/>
            <person name="Hino Y."/>
            <person name="Yamamoto S."/>
            <person name="Sekine M."/>
            <person name="Baba S."/>
            <person name="Kosugi H."/>
            <person name="Hosoyama A."/>
            <person name="Nagai Y."/>
            <person name="Sakai M."/>
            <person name="Ogura K."/>
            <person name="Otsuka R."/>
            <person name="Nakazawa H."/>
            <person name="Takamiya M."/>
            <person name="Ohfuku Y."/>
            <person name="Funahashi T."/>
            <person name="Tanaka T."/>
            <person name="Kudoh Y."/>
            <person name="Yamazaki J."/>
            <person name="Kushida N."/>
            <person name="Oguchi A."/>
            <person name="Aoki K."/>
            <person name="Yoshizawa T."/>
            <person name="Nakamura Y."/>
            <person name="Robb F.T."/>
            <person name="Horikoshi K."/>
            <person name="Masuchi Y."/>
            <person name="Shizuya H."/>
            <person name="Kikuchi H."/>
        </authorList>
    </citation>
    <scope>NUCLEOTIDE SEQUENCE [LARGE SCALE GENOMIC DNA]</scope>
    <source>
        <strain>ATCC 700860 / DSM 12428 / JCM 9974 / NBRC 100139 / OT-3</strain>
    </source>
</reference>